<comment type="function">
    <text evidence="1">Cell wall formation. Catalyzes the transfer of a GlcNAc subunit on undecaprenyl-pyrophosphoryl-MurNAc-pentapeptide (lipid intermediate I) to form undecaprenyl-pyrophosphoryl-MurNAc-(pentapeptide)GlcNAc (lipid intermediate II).</text>
</comment>
<comment type="catalytic activity">
    <reaction evidence="1">
        <text>di-trans,octa-cis-undecaprenyl diphospho-N-acetyl-alpha-D-muramoyl-L-alanyl-D-glutamyl-meso-2,6-diaminopimeloyl-D-alanyl-D-alanine + UDP-N-acetyl-alpha-D-glucosamine = di-trans,octa-cis-undecaprenyl diphospho-[N-acetyl-alpha-D-glucosaminyl-(1-&gt;4)]-N-acetyl-alpha-D-muramoyl-L-alanyl-D-glutamyl-meso-2,6-diaminopimeloyl-D-alanyl-D-alanine + UDP + H(+)</text>
        <dbReference type="Rhea" id="RHEA:31227"/>
        <dbReference type="ChEBI" id="CHEBI:15378"/>
        <dbReference type="ChEBI" id="CHEBI:57705"/>
        <dbReference type="ChEBI" id="CHEBI:58223"/>
        <dbReference type="ChEBI" id="CHEBI:61387"/>
        <dbReference type="ChEBI" id="CHEBI:61388"/>
        <dbReference type="EC" id="2.4.1.227"/>
    </reaction>
</comment>
<comment type="pathway">
    <text evidence="1">Cell wall biogenesis; peptidoglycan biosynthesis.</text>
</comment>
<comment type="subcellular location">
    <subcellularLocation>
        <location evidence="1">Cell inner membrane</location>
        <topology evidence="1">Peripheral membrane protein</topology>
        <orientation evidence="1">Cytoplasmic side</orientation>
    </subcellularLocation>
</comment>
<comment type="similarity">
    <text evidence="1">Belongs to the glycosyltransferase 28 family. MurG subfamily.</text>
</comment>
<protein>
    <recommendedName>
        <fullName evidence="1">UDP-N-acetylglucosamine--N-acetylmuramyl-(pentapeptide) pyrophosphoryl-undecaprenol N-acetylglucosamine transferase</fullName>
        <ecNumber evidence="1">2.4.1.227</ecNumber>
    </recommendedName>
    <alternativeName>
        <fullName evidence="1">Undecaprenyl-PP-MurNAc-pentapeptide-UDPGlcNAc GlcNAc transferase</fullName>
    </alternativeName>
</protein>
<name>MURG_ERYLH</name>
<proteinExistence type="inferred from homology"/>
<evidence type="ECO:0000255" key="1">
    <source>
        <dbReference type="HAMAP-Rule" id="MF_00033"/>
    </source>
</evidence>
<gene>
    <name evidence="1" type="primary">murG</name>
    <name type="ordered locus">ELI_01795</name>
</gene>
<sequence length="398" mass="42510">MTGANRHYVLAAGGTGGHLLPAFALAAELDRRGHHVALITDERGAKIPGKPDFLPAHVIPAGRFGKNPLRWVGGLRAVWKGREMAKRLFESFQPSAVVGFGGYPALPAMLAASREDIPSIIHEQNAVLGRVNRLQAGRVSAIATAYPEIQRLKPKHAEKIHLVGNPVRAGVLSLRDEPFPPFTEDGLLKVLVTGGSQGASVLSQIVPDGLAMLPPALRQRLQVTQQCRPEDLDTVRERYKTHDIPAELGSYFEDMAARLADAHLFIGRAGASTIAELTAVGRPAILVPLPIATDDHQAHNTREVVKAGGARMIRQEKFTPKELAKQIQALGQRPDTLATAAHAAWNCGRPKAVEDLADLVESFGGADMMDVIKVGGNNARAASQGVAVGQGAAKERAE</sequence>
<dbReference type="EC" id="2.4.1.227" evidence="1"/>
<dbReference type="EMBL" id="CP000157">
    <property type="protein sequence ID" value="ABC62451.1"/>
    <property type="molecule type" value="Genomic_DNA"/>
</dbReference>
<dbReference type="RefSeq" id="WP_011413327.1">
    <property type="nucleotide sequence ID" value="NC_007722.1"/>
</dbReference>
<dbReference type="SMR" id="Q2NCZ0"/>
<dbReference type="STRING" id="314225.ELI_01795"/>
<dbReference type="CAZy" id="GT28">
    <property type="family name" value="Glycosyltransferase Family 28"/>
</dbReference>
<dbReference type="KEGG" id="eli:ELI_01795"/>
<dbReference type="eggNOG" id="COG0707">
    <property type="taxonomic scope" value="Bacteria"/>
</dbReference>
<dbReference type="HOGENOM" id="CLU_037404_2_1_5"/>
<dbReference type="OrthoDB" id="9808936at2"/>
<dbReference type="UniPathway" id="UPA00219"/>
<dbReference type="Proteomes" id="UP000008808">
    <property type="component" value="Chromosome"/>
</dbReference>
<dbReference type="GO" id="GO:0005886">
    <property type="term" value="C:plasma membrane"/>
    <property type="evidence" value="ECO:0007669"/>
    <property type="project" value="UniProtKB-SubCell"/>
</dbReference>
<dbReference type="GO" id="GO:0051991">
    <property type="term" value="F:UDP-N-acetyl-D-glucosamine:N-acetylmuramoyl-L-alanyl-D-glutamyl-meso-2,6-diaminopimelyl-D-alanyl-D-alanine-diphosphoundecaprenol 4-beta-N-acetylglucosaminlytransferase activity"/>
    <property type="evidence" value="ECO:0007669"/>
    <property type="project" value="RHEA"/>
</dbReference>
<dbReference type="GO" id="GO:0050511">
    <property type="term" value="F:undecaprenyldiphospho-muramoylpentapeptide beta-N-acetylglucosaminyltransferase activity"/>
    <property type="evidence" value="ECO:0007669"/>
    <property type="project" value="UniProtKB-UniRule"/>
</dbReference>
<dbReference type="GO" id="GO:0005975">
    <property type="term" value="P:carbohydrate metabolic process"/>
    <property type="evidence" value="ECO:0007669"/>
    <property type="project" value="InterPro"/>
</dbReference>
<dbReference type="GO" id="GO:0051301">
    <property type="term" value="P:cell division"/>
    <property type="evidence" value="ECO:0007669"/>
    <property type="project" value="UniProtKB-KW"/>
</dbReference>
<dbReference type="GO" id="GO:0071555">
    <property type="term" value="P:cell wall organization"/>
    <property type="evidence" value="ECO:0007669"/>
    <property type="project" value="UniProtKB-KW"/>
</dbReference>
<dbReference type="GO" id="GO:0030259">
    <property type="term" value="P:lipid glycosylation"/>
    <property type="evidence" value="ECO:0007669"/>
    <property type="project" value="UniProtKB-UniRule"/>
</dbReference>
<dbReference type="GO" id="GO:0009252">
    <property type="term" value="P:peptidoglycan biosynthetic process"/>
    <property type="evidence" value="ECO:0007669"/>
    <property type="project" value="UniProtKB-UniRule"/>
</dbReference>
<dbReference type="GO" id="GO:0008360">
    <property type="term" value="P:regulation of cell shape"/>
    <property type="evidence" value="ECO:0007669"/>
    <property type="project" value="UniProtKB-KW"/>
</dbReference>
<dbReference type="CDD" id="cd03785">
    <property type="entry name" value="GT28_MurG"/>
    <property type="match status" value="1"/>
</dbReference>
<dbReference type="Gene3D" id="3.40.50.2000">
    <property type="entry name" value="Glycogen Phosphorylase B"/>
    <property type="match status" value="2"/>
</dbReference>
<dbReference type="HAMAP" id="MF_00033">
    <property type="entry name" value="MurG"/>
    <property type="match status" value="1"/>
</dbReference>
<dbReference type="InterPro" id="IPR006009">
    <property type="entry name" value="GlcNAc_MurG"/>
</dbReference>
<dbReference type="InterPro" id="IPR007235">
    <property type="entry name" value="Glyco_trans_28_C"/>
</dbReference>
<dbReference type="InterPro" id="IPR004276">
    <property type="entry name" value="GlycoTrans_28_N"/>
</dbReference>
<dbReference type="NCBIfam" id="TIGR01133">
    <property type="entry name" value="murG"/>
    <property type="match status" value="1"/>
</dbReference>
<dbReference type="PANTHER" id="PTHR21015:SF22">
    <property type="entry name" value="GLYCOSYLTRANSFERASE"/>
    <property type="match status" value="1"/>
</dbReference>
<dbReference type="PANTHER" id="PTHR21015">
    <property type="entry name" value="UDP-N-ACETYLGLUCOSAMINE--N-ACETYLMURAMYL-(PENTAPEPTIDE) PYROPHOSPHORYL-UNDECAPRENOL N-ACETYLGLUCOSAMINE TRANSFERASE 1"/>
    <property type="match status" value="1"/>
</dbReference>
<dbReference type="Pfam" id="PF04101">
    <property type="entry name" value="Glyco_tran_28_C"/>
    <property type="match status" value="1"/>
</dbReference>
<dbReference type="Pfam" id="PF03033">
    <property type="entry name" value="Glyco_transf_28"/>
    <property type="match status" value="1"/>
</dbReference>
<dbReference type="SUPFAM" id="SSF53756">
    <property type="entry name" value="UDP-Glycosyltransferase/glycogen phosphorylase"/>
    <property type="match status" value="1"/>
</dbReference>
<organism>
    <name type="scientific">Erythrobacter litoralis (strain HTCC2594)</name>
    <dbReference type="NCBI Taxonomy" id="314225"/>
    <lineage>
        <taxon>Bacteria</taxon>
        <taxon>Pseudomonadati</taxon>
        <taxon>Pseudomonadota</taxon>
        <taxon>Alphaproteobacteria</taxon>
        <taxon>Sphingomonadales</taxon>
        <taxon>Erythrobacteraceae</taxon>
        <taxon>Erythrobacter/Porphyrobacter group</taxon>
        <taxon>Erythrobacter</taxon>
    </lineage>
</organism>
<reference key="1">
    <citation type="journal article" date="2009" name="J. Bacteriol.">
        <title>Complete genome sequence of Erythrobacter litoralis HTCC2594.</title>
        <authorList>
            <person name="Oh H.M."/>
            <person name="Giovannoni S.J."/>
            <person name="Ferriera S."/>
            <person name="Johnson J."/>
            <person name="Cho J.C."/>
        </authorList>
    </citation>
    <scope>NUCLEOTIDE SEQUENCE [LARGE SCALE GENOMIC DNA]</scope>
    <source>
        <strain>HTCC2594</strain>
    </source>
</reference>
<feature type="chain" id="PRO_0000315092" description="UDP-N-acetylglucosamine--N-acetylmuramyl-(pentapeptide) pyrophosphoryl-undecaprenol N-acetylglucosamine transferase">
    <location>
        <begin position="1"/>
        <end position="398"/>
    </location>
</feature>
<feature type="binding site" evidence="1">
    <location>
        <begin position="15"/>
        <end position="17"/>
    </location>
    <ligand>
        <name>UDP-N-acetyl-alpha-D-glucosamine</name>
        <dbReference type="ChEBI" id="CHEBI:57705"/>
    </ligand>
</feature>
<feature type="binding site" evidence="1">
    <location>
        <position position="125"/>
    </location>
    <ligand>
        <name>UDP-N-acetyl-alpha-D-glucosamine</name>
        <dbReference type="ChEBI" id="CHEBI:57705"/>
    </ligand>
</feature>
<feature type="binding site" evidence="1">
    <location>
        <position position="168"/>
    </location>
    <ligand>
        <name>UDP-N-acetyl-alpha-D-glucosamine</name>
        <dbReference type="ChEBI" id="CHEBI:57705"/>
    </ligand>
</feature>
<feature type="binding site" evidence="1">
    <location>
        <position position="196"/>
    </location>
    <ligand>
        <name>UDP-N-acetyl-alpha-D-glucosamine</name>
        <dbReference type="ChEBI" id="CHEBI:57705"/>
    </ligand>
</feature>
<feature type="binding site" evidence="1">
    <location>
        <position position="297"/>
    </location>
    <ligand>
        <name>UDP-N-acetyl-alpha-D-glucosamine</name>
        <dbReference type="ChEBI" id="CHEBI:57705"/>
    </ligand>
</feature>
<keyword id="KW-0131">Cell cycle</keyword>
<keyword id="KW-0132">Cell division</keyword>
<keyword id="KW-0997">Cell inner membrane</keyword>
<keyword id="KW-1003">Cell membrane</keyword>
<keyword id="KW-0133">Cell shape</keyword>
<keyword id="KW-0961">Cell wall biogenesis/degradation</keyword>
<keyword id="KW-0328">Glycosyltransferase</keyword>
<keyword id="KW-0472">Membrane</keyword>
<keyword id="KW-0573">Peptidoglycan synthesis</keyword>
<keyword id="KW-1185">Reference proteome</keyword>
<keyword id="KW-0808">Transferase</keyword>
<accession>Q2NCZ0</accession>